<evidence type="ECO:0000255" key="1">
    <source>
        <dbReference type="HAMAP-Rule" id="MF_00193"/>
    </source>
</evidence>
<keyword id="KW-0067">ATP-binding</keyword>
<keyword id="KW-0436">Ligase</keyword>
<keyword id="KW-0460">Magnesium</keyword>
<keyword id="KW-0479">Metal-binding</keyword>
<keyword id="KW-0520">NAD</keyword>
<keyword id="KW-0547">Nucleotide-binding</keyword>
<keyword id="KW-1185">Reference proteome</keyword>
<accession>Q8NMN7</accession>
<dbReference type="EC" id="6.3.1.5" evidence="1"/>
<dbReference type="EMBL" id="BA000036">
    <property type="protein sequence ID" value="BAB99927.1"/>
    <property type="molecule type" value="Genomic_DNA"/>
</dbReference>
<dbReference type="EMBL" id="BX927155">
    <property type="protein sequence ID" value="CAF21196.1"/>
    <property type="molecule type" value="Genomic_DNA"/>
</dbReference>
<dbReference type="RefSeq" id="NP_601734.1">
    <property type="nucleotide sequence ID" value="NC_003450.3"/>
</dbReference>
<dbReference type="RefSeq" id="WP_011015194.1">
    <property type="nucleotide sequence ID" value="NC_006958.1"/>
</dbReference>
<dbReference type="SMR" id="Q8NMN7"/>
<dbReference type="STRING" id="196627.cg2792"/>
<dbReference type="GeneID" id="1020481"/>
<dbReference type="KEGG" id="cgb:cg2792"/>
<dbReference type="KEGG" id="cgl:Cgl2534"/>
<dbReference type="PATRIC" id="fig|196627.13.peg.2467"/>
<dbReference type="eggNOG" id="COG0171">
    <property type="taxonomic scope" value="Bacteria"/>
</dbReference>
<dbReference type="HOGENOM" id="CLU_059327_3_0_11"/>
<dbReference type="OrthoDB" id="3266517at2"/>
<dbReference type="BioCyc" id="CORYNE:G18NG-12138-MONOMER"/>
<dbReference type="UniPathway" id="UPA00253">
    <property type="reaction ID" value="UER00333"/>
</dbReference>
<dbReference type="Proteomes" id="UP000000582">
    <property type="component" value="Chromosome"/>
</dbReference>
<dbReference type="Proteomes" id="UP000001009">
    <property type="component" value="Chromosome"/>
</dbReference>
<dbReference type="GO" id="GO:0005737">
    <property type="term" value="C:cytoplasm"/>
    <property type="evidence" value="ECO:0007669"/>
    <property type="project" value="InterPro"/>
</dbReference>
<dbReference type="GO" id="GO:0005524">
    <property type="term" value="F:ATP binding"/>
    <property type="evidence" value="ECO:0007669"/>
    <property type="project" value="UniProtKB-UniRule"/>
</dbReference>
<dbReference type="GO" id="GO:0004359">
    <property type="term" value="F:glutaminase activity"/>
    <property type="evidence" value="ECO:0007669"/>
    <property type="project" value="InterPro"/>
</dbReference>
<dbReference type="GO" id="GO:0046872">
    <property type="term" value="F:metal ion binding"/>
    <property type="evidence" value="ECO:0007669"/>
    <property type="project" value="UniProtKB-KW"/>
</dbReference>
<dbReference type="GO" id="GO:0003952">
    <property type="term" value="F:NAD+ synthase (glutamine-hydrolyzing) activity"/>
    <property type="evidence" value="ECO:0007669"/>
    <property type="project" value="InterPro"/>
</dbReference>
<dbReference type="GO" id="GO:0008795">
    <property type="term" value="F:NAD+ synthase activity"/>
    <property type="evidence" value="ECO:0007669"/>
    <property type="project" value="UniProtKB-UniRule"/>
</dbReference>
<dbReference type="GO" id="GO:0009435">
    <property type="term" value="P:NAD biosynthetic process"/>
    <property type="evidence" value="ECO:0007669"/>
    <property type="project" value="UniProtKB-UniRule"/>
</dbReference>
<dbReference type="CDD" id="cd00553">
    <property type="entry name" value="NAD_synthase"/>
    <property type="match status" value="1"/>
</dbReference>
<dbReference type="FunFam" id="3.40.50.620:FF:000015">
    <property type="entry name" value="NH(3)-dependent NAD(+) synthetase"/>
    <property type="match status" value="1"/>
</dbReference>
<dbReference type="Gene3D" id="3.40.50.620">
    <property type="entry name" value="HUPs"/>
    <property type="match status" value="1"/>
</dbReference>
<dbReference type="HAMAP" id="MF_00193">
    <property type="entry name" value="NadE_ammonia_dep"/>
    <property type="match status" value="1"/>
</dbReference>
<dbReference type="InterPro" id="IPR022310">
    <property type="entry name" value="NAD/GMP_synthase"/>
</dbReference>
<dbReference type="InterPro" id="IPR003694">
    <property type="entry name" value="NAD_synthase"/>
</dbReference>
<dbReference type="InterPro" id="IPR022926">
    <property type="entry name" value="NH(3)-dep_NAD(+)_synth"/>
</dbReference>
<dbReference type="InterPro" id="IPR014729">
    <property type="entry name" value="Rossmann-like_a/b/a_fold"/>
</dbReference>
<dbReference type="NCBIfam" id="TIGR00552">
    <property type="entry name" value="nadE"/>
    <property type="match status" value="1"/>
</dbReference>
<dbReference type="NCBIfam" id="NF001979">
    <property type="entry name" value="PRK00768.1"/>
    <property type="match status" value="1"/>
</dbReference>
<dbReference type="PANTHER" id="PTHR23090">
    <property type="entry name" value="NH 3 /GLUTAMINE-DEPENDENT NAD + SYNTHETASE"/>
    <property type="match status" value="1"/>
</dbReference>
<dbReference type="PANTHER" id="PTHR23090:SF7">
    <property type="entry name" value="NH(3)-DEPENDENT NAD(+) SYNTHETASE"/>
    <property type="match status" value="1"/>
</dbReference>
<dbReference type="Pfam" id="PF02540">
    <property type="entry name" value="NAD_synthase"/>
    <property type="match status" value="1"/>
</dbReference>
<dbReference type="SUPFAM" id="SSF52402">
    <property type="entry name" value="Adenine nucleotide alpha hydrolases-like"/>
    <property type="match status" value="1"/>
</dbReference>
<comment type="function">
    <text evidence="1">Catalyzes the ATP-dependent amidation of deamido-NAD to form NAD. Uses ammonia as a nitrogen source.</text>
</comment>
<comment type="catalytic activity">
    <reaction evidence="1">
        <text>deamido-NAD(+) + NH4(+) + ATP = AMP + diphosphate + NAD(+) + H(+)</text>
        <dbReference type="Rhea" id="RHEA:21188"/>
        <dbReference type="ChEBI" id="CHEBI:15378"/>
        <dbReference type="ChEBI" id="CHEBI:28938"/>
        <dbReference type="ChEBI" id="CHEBI:30616"/>
        <dbReference type="ChEBI" id="CHEBI:33019"/>
        <dbReference type="ChEBI" id="CHEBI:57540"/>
        <dbReference type="ChEBI" id="CHEBI:58437"/>
        <dbReference type="ChEBI" id="CHEBI:456215"/>
        <dbReference type="EC" id="6.3.1.5"/>
    </reaction>
</comment>
<comment type="pathway">
    <text evidence="1">Cofactor biosynthesis; NAD(+) biosynthesis; NAD(+) from deamido-NAD(+) (ammonia route): step 1/1.</text>
</comment>
<comment type="subunit">
    <text evidence="1">Homodimer.</text>
</comment>
<comment type="similarity">
    <text evidence="1">Belongs to the NAD synthetase family.</text>
</comment>
<reference key="1">
    <citation type="journal article" date="2003" name="Appl. Microbiol. Biotechnol.">
        <title>The Corynebacterium glutamicum genome: features and impacts on biotechnological processes.</title>
        <authorList>
            <person name="Ikeda M."/>
            <person name="Nakagawa S."/>
        </authorList>
    </citation>
    <scope>NUCLEOTIDE SEQUENCE [LARGE SCALE GENOMIC DNA]</scope>
    <source>
        <strain>ATCC 13032 / DSM 20300 / JCM 1318 / BCRC 11384 / CCUG 27702 / LMG 3730 / NBRC 12168 / NCIMB 10025 / NRRL B-2784 / 534</strain>
    </source>
</reference>
<reference key="2">
    <citation type="journal article" date="2003" name="J. Biotechnol.">
        <title>The complete Corynebacterium glutamicum ATCC 13032 genome sequence and its impact on the production of L-aspartate-derived amino acids and vitamins.</title>
        <authorList>
            <person name="Kalinowski J."/>
            <person name="Bathe B."/>
            <person name="Bartels D."/>
            <person name="Bischoff N."/>
            <person name="Bott M."/>
            <person name="Burkovski A."/>
            <person name="Dusch N."/>
            <person name="Eggeling L."/>
            <person name="Eikmanns B.J."/>
            <person name="Gaigalat L."/>
            <person name="Goesmann A."/>
            <person name="Hartmann M."/>
            <person name="Huthmacher K."/>
            <person name="Kraemer R."/>
            <person name="Linke B."/>
            <person name="McHardy A.C."/>
            <person name="Meyer F."/>
            <person name="Moeckel B."/>
            <person name="Pfefferle W."/>
            <person name="Puehler A."/>
            <person name="Rey D.A."/>
            <person name="Rueckert C."/>
            <person name="Rupp O."/>
            <person name="Sahm H."/>
            <person name="Wendisch V.F."/>
            <person name="Wiegraebe I."/>
            <person name="Tauch A."/>
        </authorList>
    </citation>
    <scope>NUCLEOTIDE SEQUENCE [LARGE SCALE GENOMIC DNA]</scope>
    <source>
        <strain>ATCC 13032 / DSM 20300 / JCM 1318 / BCRC 11384 / CCUG 27702 / LMG 3730 / NBRC 12168 / NCIMB 10025 / NRRL B-2784 / 534</strain>
    </source>
</reference>
<protein>
    <recommendedName>
        <fullName evidence="1">NH(3)-dependent NAD(+) synthetase</fullName>
        <ecNumber evidence="1">6.3.1.5</ecNumber>
    </recommendedName>
</protein>
<feature type="chain" id="PRO_0000152165" description="NH(3)-dependent NAD(+) synthetase">
    <location>
        <begin position="1"/>
        <end position="277"/>
    </location>
</feature>
<feature type="binding site" evidence="1">
    <location>
        <begin position="46"/>
        <end position="53"/>
    </location>
    <ligand>
        <name>ATP</name>
        <dbReference type="ChEBI" id="CHEBI:30616"/>
    </ligand>
</feature>
<feature type="binding site" evidence="1">
    <location>
        <position position="52"/>
    </location>
    <ligand>
        <name>Mg(2+)</name>
        <dbReference type="ChEBI" id="CHEBI:18420"/>
    </ligand>
</feature>
<feature type="binding site" evidence="1">
    <location>
        <position position="142"/>
    </location>
    <ligand>
        <name>deamido-NAD(+)</name>
        <dbReference type="ChEBI" id="CHEBI:58437"/>
    </ligand>
</feature>
<feature type="binding site" evidence="1">
    <location>
        <position position="162"/>
    </location>
    <ligand>
        <name>ATP</name>
        <dbReference type="ChEBI" id="CHEBI:30616"/>
    </ligand>
</feature>
<feature type="binding site" evidence="1">
    <location>
        <position position="167"/>
    </location>
    <ligand>
        <name>Mg(2+)</name>
        <dbReference type="ChEBI" id="CHEBI:18420"/>
    </ligand>
</feature>
<feature type="binding site" evidence="1">
    <location>
        <position position="175"/>
    </location>
    <ligand>
        <name>deamido-NAD(+)</name>
        <dbReference type="ChEBI" id="CHEBI:58437"/>
    </ligand>
</feature>
<feature type="binding site" evidence="1">
    <location>
        <position position="182"/>
    </location>
    <ligand>
        <name>deamido-NAD(+)</name>
        <dbReference type="ChEBI" id="CHEBI:58437"/>
    </ligand>
</feature>
<feature type="binding site" evidence="1">
    <location>
        <position position="191"/>
    </location>
    <ligand>
        <name>ATP</name>
        <dbReference type="ChEBI" id="CHEBI:30616"/>
    </ligand>
</feature>
<feature type="binding site" evidence="1">
    <location>
        <position position="213"/>
    </location>
    <ligand>
        <name>ATP</name>
        <dbReference type="ChEBI" id="CHEBI:30616"/>
    </ligand>
</feature>
<feature type="binding site" evidence="1">
    <location>
        <begin position="263"/>
        <end position="264"/>
    </location>
    <ligand>
        <name>deamido-NAD(+)</name>
        <dbReference type="ChEBI" id="CHEBI:58437"/>
    </ligand>
</feature>
<proteinExistence type="inferred from homology"/>
<gene>
    <name evidence="1" type="primary">nadE</name>
    <name type="ordered locus">Cgl2534</name>
    <name type="ordered locus">cg2792</name>
</gene>
<name>NADE_CORGL</name>
<sequence>MTNTQTEIINELKVSPAIDVAKEVEFRVQFLVDYLRASHTKGFVLGISGGQDSTLAGRLTQLAVERIRAEENSTDYVFYAVRLPYAIQADEDDAQVALEFIAPDKSVTVNVKDATDATEATVAAALELPELTDFNRGNIKARQRMVAQYAIAGQLGLLVIGTDHAAENVTGFFTKFGDGAADLLPLAGLSKRQGAAILEHLGAPSSTWTKVPTADLEEDRPALPDEEALGVSYADIDNYLENKPDVSEKAQQRIEHLWKVGQHKRHLPATPQENWWR</sequence>
<organism>
    <name type="scientific">Corynebacterium glutamicum (strain ATCC 13032 / DSM 20300 / JCM 1318 / BCRC 11384 / CCUG 27702 / LMG 3730 / NBRC 12168 / NCIMB 10025 / NRRL B-2784 / 534)</name>
    <dbReference type="NCBI Taxonomy" id="196627"/>
    <lineage>
        <taxon>Bacteria</taxon>
        <taxon>Bacillati</taxon>
        <taxon>Actinomycetota</taxon>
        <taxon>Actinomycetes</taxon>
        <taxon>Mycobacteriales</taxon>
        <taxon>Corynebacteriaceae</taxon>
        <taxon>Corynebacterium</taxon>
    </lineage>
</organism>